<sequence length="481" mass="54753">MRHLWLLLLLCVFSVQTQAADDDYDEPTDSLDARGHRPVDRRKEEPPSLRPAPPPISGGGYRARPAKATANQKKVERRPPDAGGCLHADTDMGVLCPTGCTLQQTLLNQERPIKSSIAELNNNIQSVSDTSSVTFQYLTLLKDMWKKKQAQVKENENVINEYSSILEDQRLYIDETVNDNIPLNLRVLRSILEDLRSKIQKLESDISAQMEYCRTPCTVSCNIPVVSGKECEEIIRKGGETSEMYLIQPDTSIKPYRVYCDMKTENGGWTVIQNRQDGSVDFGRKWDPYKKGFGNIATNEDAKKYCGLPGEYWLGNDKISQLTRMGPTELLIEMEDWKGDKVKAHYGGFTVQNEASKYQVSVNKYKGTAGNALMDGASQLVGENRTMTIHNGMFFSTYDRDNDGWVTTDPRKQCSKEDGGGWWYNRCHAANPNGRYYWGGLYSWDMSKHGTDDGVVWMNWKGSWYSMRRMSMKIRPFFPQQ</sequence>
<dbReference type="EMBL" id="BC031715">
    <property type="protein sequence ID" value="AAH31715.1"/>
    <property type="molecule type" value="mRNA"/>
</dbReference>
<dbReference type="EMBL" id="AF413205">
    <property type="protein sequence ID" value="AAL02225.1"/>
    <property type="molecule type" value="mRNA"/>
</dbReference>
<dbReference type="CCDS" id="CCDS17432.1"/>
<dbReference type="RefSeq" id="NP_862897.1">
    <property type="nucleotide sequence ID" value="NM_181849.3"/>
</dbReference>
<dbReference type="SMR" id="Q8K0E8"/>
<dbReference type="BioGRID" id="225325">
    <property type="interactions" value="14"/>
</dbReference>
<dbReference type="ComplexPortal" id="CPX-1916">
    <property type="entry name" value="Fibrinogen"/>
</dbReference>
<dbReference type="FunCoup" id="Q8K0E8">
    <property type="interactions" value="276"/>
</dbReference>
<dbReference type="IntAct" id="Q8K0E8">
    <property type="interactions" value="4"/>
</dbReference>
<dbReference type="STRING" id="10090.ENSMUSP00000039472"/>
<dbReference type="GlyConnect" id="2312">
    <property type="glycosylation" value="1 N-Linked glycan (1 site)"/>
</dbReference>
<dbReference type="GlyCosmos" id="Q8K0E8">
    <property type="glycosylation" value="1 site, 1 glycan"/>
</dbReference>
<dbReference type="GlyGen" id="Q8K0E8">
    <property type="glycosylation" value="2 sites, 2 N-linked glycans (1 site), 1 O-linked glycan (1 site)"/>
</dbReference>
<dbReference type="iPTMnet" id="Q8K0E8"/>
<dbReference type="PhosphoSitePlus" id="Q8K0E8"/>
<dbReference type="SwissPalm" id="Q8K0E8"/>
<dbReference type="REPRODUCTION-2DPAGE" id="IPI00279079"/>
<dbReference type="REPRODUCTION-2DPAGE" id="Q8K0E8"/>
<dbReference type="CPTAC" id="non-CPTAC-3332"/>
<dbReference type="jPOST" id="Q8K0E8"/>
<dbReference type="PaxDb" id="10090-ENSMUSP00000039472"/>
<dbReference type="PeptideAtlas" id="Q8K0E8"/>
<dbReference type="ProteomicsDB" id="270990"/>
<dbReference type="Antibodypedia" id="855">
    <property type="antibodies" value="612 antibodies from 38 providers"/>
</dbReference>
<dbReference type="DNASU" id="110135"/>
<dbReference type="Ensembl" id="ENSMUST00000048246.5">
    <property type="protein sequence ID" value="ENSMUSP00000039472.4"/>
    <property type="gene ID" value="ENSMUSG00000033831.6"/>
</dbReference>
<dbReference type="GeneID" id="110135"/>
<dbReference type="KEGG" id="mmu:110135"/>
<dbReference type="UCSC" id="uc008pph.1">
    <property type="organism name" value="mouse"/>
</dbReference>
<dbReference type="AGR" id="MGI:99501"/>
<dbReference type="CTD" id="2244"/>
<dbReference type="MGI" id="MGI:99501">
    <property type="gene designation" value="Fgb"/>
</dbReference>
<dbReference type="VEuPathDB" id="HostDB:ENSMUSG00000033831"/>
<dbReference type="eggNOG" id="KOG2579">
    <property type="taxonomic scope" value="Eukaryota"/>
</dbReference>
<dbReference type="GeneTree" id="ENSGT00940000158122"/>
<dbReference type="HOGENOM" id="CLU_038628_13_0_1"/>
<dbReference type="InParanoid" id="Q8K0E8"/>
<dbReference type="OMA" id="GCIHADP"/>
<dbReference type="OrthoDB" id="9930906at2759"/>
<dbReference type="PhylomeDB" id="Q8K0E8"/>
<dbReference type="TreeFam" id="TF336658"/>
<dbReference type="Reactome" id="R-MMU-114608">
    <property type="pathway name" value="Platelet degranulation"/>
</dbReference>
<dbReference type="Reactome" id="R-MMU-140875">
    <property type="pathway name" value="Common Pathway of Fibrin Clot Formation"/>
</dbReference>
<dbReference type="Reactome" id="R-MMU-216083">
    <property type="pathway name" value="Integrin cell surface interactions"/>
</dbReference>
<dbReference type="Reactome" id="R-MMU-354192">
    <property type="pathway name" value="Integrin signaling"/>
</dbReference>
<dbReference type="Reactome" id="R-MMU-354194">
    <property type="pathway name" value="GRB2:SOS provides linkage to MAPK signaling for Integrins"/>
</dbReference>
<dbReference type="Reactome" id="R-MMU-372708">
    <property type="pathway name" value="p130Cas linkage to MAPK signaling for integrins"/>
</dbReference>
<dbReference type="Reactome" id="R-MMU-5674135">
    <property type="pathway name" value="MAP2K and MAPK activation"/>
</dbReference>
<dbReference type="Reactome" id="R-MMU-5686938">
    <property type="pathway name" value="Regulation of TLR by endogenous ligand"/>
</dbReference>
<dbReference type="BioGRID-ORCS" id="110135">
    <property type="hits" value="1 hit in 79 CRISPR screens"/>
</dbReference>
<dbReference type="ChiTaRS" id="Fgb">
    <property type="organism name" value="mouse"/>
</dbReference>
<dbReference type="PRO" id="PR:Q8K0E8"/>
<dbReference type="Proteomes" id="UP000000589">
    <property type="component" value="Chromosome 3"/>
</dbReference>
<dbReference type="RNAct" id="Q8K0E8">
    <property type="molecule type" value="protein"/>
</dbReference>
<dbReference type="Bgee" id="ENSMUSG00000033831">
    <property type="expression patterns" value="Expressed in left lobe of liver and 66 other cell types or tissues"/>
</dbReference>
<dbReference type="ExpressionAtlas" id="Q8K0E8">
    <property type="expression patterns" value="baseline and differential"/>
</dbReference>
<dbReference type="GO" id="GO:0072562">
    <property type="term" value="C:blood microparticle"/>
    <property type="evidence" value="ECO:0007669"/>
    <property type="project" value="Ensembl"/>
</dbReference>
<dbReference type="GO" id="GO:0005938">
    <property type="term" value="C:cell cortex"/>
    <property type="evidence" value="ECO:0000314"/>
    <property type="project" value="MGI"/>
</dbReference>
<dbReference type="GO" id="GO:0062023">
    <property type="term" value="C:collagen-containing extracellular matrix"/>
    <property type="evidence" value="ECO:0007005"/>
    <property type="project" value="BHF-UCL"/>
</dbReference>
<dbReference type="GO" id="GO:0005783">
    <property type="term" value="C:endoplasmic reticulum"/>
    <property type="evidence" value="ECO:0007669"/>
    <property type="project" value="Ensembl"/>
</dbReference>
<dbReference type="GO" id="GO:0009897">
    <property type="term" value="C:external side of plasma membrane"/>
    <property type="evidence" value="ECO:0007669"/>
    <property type="project" value="Ensembl"/>
</dbReference>
<dbReference type="GO" id="GO:0005577">
    <property type="term" value="C:fibrinogen complex"/>
    <property type="evidence" value="ECO:0007669"/>
    <property type="project" value="Ensembl"/>
</dbReference>
<dbReference type="GO" id="GO:0031091">
    <property type="term" value="C:platelet alpha granule"/>
    <property type="evidence" value="ECO:0007669"/>
    <property type="project" value="Ensembl"/>
</dbReference>
<dbReference type="GO" id="GO:0045202">
    <property type="term" value="C:synapse"/>
    <property type="evidence" value="ECO:0000314"/>
    <property type="project" value="SynGO"/>
</dbReference>
<dbReference type="GO" id="GO:0050839">
    <property type="term" value="F:cell adhesion molecule binding"/>
    <property type="evidence" value="ECO:0007669"/>
    <property type="project" value="Ensembl"/>
</dbReference>
<dbReference type="GO" id="GO:0051087">
    <property type="term" value="F:protein-folding chaperone binding"/>
    <property type="evidence" value="ECO:0007669"/>
    <property type="project" value="Ensembl"/>
</dbReference>
<dbReference type="GO" id="GO:0005102">
    <property type="term" value="F:signaling receptor binding"/>
    <property type="evidence" value="ECO:0007669"/>
    <property type="project" value="Ensembl"/>
</dbReference>
<dbReference type="GO" id="GO:0005198">
    <property type="term" value="F:structural molecule activity"/>
    <property type="evidence" value="ECO:0007669"/>
    <property type="project" value="Ensembl"/>
</dbReference>
<dbReference type="GO" id="GO:0002250">
    <property type="term" value="P:adaptive immune response"/>
    <property type="evidence" value="ECO:0007669"/>
    <property type="project" value="UniProtKB-KW"/>
</dbReference>
<dbReference type="GO" id="GO:0072378">
    <property type="term" value="P:blood coagulation, fibrin clot formation"/>
    <property type="evidence" value="ECO:0007669"/>
    <property type="project" value="Ensembl"/>
</dbReference>
<dbReference type="GO" id="GO:0007160">
    <property type="term" value="P:cell-matrix adhesion"/>
    <property type="evidence" value="ECO:0007669"/>
    <property type="project" value="Ensembl"/>
</dbReference>
<dbReference type="GO" id="GO:0071347">
    <property type="term" value="P:cellular response to interleukin-1"/>
    <property type="evidence" value="ECO:0007669"/>
    <property type="project" value="Ensembl"/>
</dbReference>
<dbReference type="GO" id="GO:0044320">
    <property type="term" value="P:cellular response to leptin stimulus"/>
    <property type="evidence" value="ECO:0007669"/>
    <property type="project" value="Ensembl"/>
</dbReference>
<dbReference type="GO" id="GO:0042730">
    <property type="term" value="P:fibrinolysis"/>
    <property type="evidence" value="ECO:0007669"/>
    <property type="project" value="Ensembl"/>
</dbReference>
<dbReference type="GO" id="GO:0043152">
    <property type="term" value="P:induction of bacterial agglutination"/>
    <property type="evidence" value="ECO:0007669"/>
    <property type="project" value="Ensembl"/>
</dbReference>
<dbReference type="GO" id="GO:0045087">
    <property type="term" value="P:innate immune response"/>
    <property type="evidence" value="ECO:0007669"/>
    <property type="project" value="UniProtKB-KW"/>
</dbReference>
<dbReference type="GO" id="GO:2000352">
    <property type="term" value="P:negative regulation of endothelial cell apoptotic process"/>
    <property type="evidence" value="ECO:0007669"/>
    <property type="project" value="Ensembl"/>
</dbReference>
<dbReference type="GO" id="GO:1902042">
    <property type="term" value="P:negative regulation of extrinsic apoptotic signaling pathway via death domain receptors"/>
    <property type="evidence" value="ECO:0007669"/>
    <property type="project" value="Ensembl"/>
</dbReference>
<dbReference type="GO" id="GO:0031639">
    <property type="term" value="P:plasminogen activation"/>
    <property type="evidence" value="ECO:0007669"/>
    <property type="project" value="Ensembl"/>
</dbReference>
<dbReference type="GO" id="GO:0070527">
    <property type="term" value="P:platelet aggregation"/>
    <property type="evidence" value="ECO:0007669"/>
    <property type="project" value="Ensembl"/>
</dbReference>
<dbReference type="GO" id="GO:0070374">
    <property type="term" value="P:positive regulation of ERK1 and ERK2 cascade"/>
    <property type="evidence" value="ECO:0007669"/>
    <property type="project" value="Ensembl"/>
</dbReference>
<dbReference type="GO" id="GO:0045921">
    <property type="term" value="P:positive regulation of exocytosis"/>
    <property type="evidence" value="ECO:0007669"/>
    <property type="project" value="Ensembl"/>
</dbReference>
<dbReference type="GO" id="GO:0034116">
    <property type="term" value="P:positive regulation of heterotypic cell-cell adhesion"/>
    <property type="evidence" value="ECO:0007669"/>
    <property type="project" value="Ensembl"/>
</dbReference>
<dbReference type="GO" id="GO:0090277">
    <property type="term" value="P:positive regulation of peptide hormone secretion"/>
    <property type="evidence" value="ECO:0007669"/>
    <property type="project" value="Ensembl"/>
</dbReference>
<dbReference type="GO" id="GO:0050714">
    <property type="term" value="P:positive regulation of protein secretion"/>
    <property type="evidence" value="ECO:0007669"/>
    <property type="project" value="Ensembl"/>
</dbReference>
<dbReference type="GO" id="GO:0045907">
    <property type="term" value="P:positive regulation of vasoconstriction"/>
    <property type="evidence" value="ECO:0007669"/>
    <property type="project" value="Ensembl"/>
</dbReference>
<dbReference type="GO" id="GO:0051258">
    <property type="term" value="P:protein polymerization"/>
    <property type="evidence" value="ECO:0007669"/>
    <property type="project" value="Ensembl"/>
</dbReference>
<dbReference type="GO" id="GO:0051592">
    <property type="term" value="P:response to calcium ion"/>
    <property type="evidence" value="ECO:0007669"/>
    <property type="project" value="Ensembl"/>
</dbReference>
<dbReference type="CDD" id="cd00087">
    <property type="entry name" value="FReD"/>
    <property type="match status" value="1"/>
</dbReference>
<dbReference type="FunFam" id="1.20.5.50:FF:000004">
    <property type="entry name" value="Fibrinogen beta chain"/>
    <property type="match status" value="1"/>
</dbReference>
<dbReference type="FunFam" id="3.90.215.10:FF:000006">
    <property type="entry name" value="Fibrinogen beta chain"/>
    <property type="match status" value="1"/>
</dbReference>
<dbReference type="Gene3D" id="1.20.5.50">
    <property type="match status" value="2"/>
</dbReference>
<dbReference type="Gene3D" id="3.90.215.10">
    <property type="entry name" value="Gamma Fibrinogen, chain A, domain 1"/>
    <property type="match status" value="1"/>
</dbReference>
<dbReference type="InterPro" id="IPR037579">
    <property type="entry name" value="FIB_ANG-like"/>
</dbReference>
<dbReference type="InterPro" id="IPR036056">
    <property type="entry name" value="Fibrinogen-like_C"/>
</dbReference>
<dbReference type="InterPro" id="IPR014716">
    <property type="entry name" value="Fibrinogen_a/b/g_C_1"/>
</dbReference>
<dbReference type="InterPro" id="IPR002181">
    <property type="entry name" value="Fibrinogen_a/b/g_C_dom"/>
</dbReference>
<dbReference type="InterPro" id="IPR012290">
    <property type="entry name" value="Fibrinogen_a/b/g_coil_dom"/>
</dbReference>
<dbReference type="InterPro" id="IPR020837">
    <property type="entry name" value="Fibrinogen_CS"/>
</dbReference>
<dbReference type="NCBIfam" id="NF040941">
    <property type="entry name" value="GGGWT_bact"/>
    <property type="match status" value="1"/>
</dbReference>
<dbReference type="PANTHER" id="PTHR47221">
    <property type="entry name" value="FIBRINOGEN ALPHA CHAIN"/>
    <property type="match status" value="1"/>
</dbReference>
<dbReference type="PANTHER" id="PTHR47221:SF5">
    <property type="entry name" value="FIBRINOGEN C-TERMINAL DOMAIN-CONTAINING PROTEIN"/>
    <property type="match status" value="1"/>
</dbReference>
<dbReference type="Pfam" id="PF08702">
    <property type="entry name" value="Fib_alpha"/>
    <property type="match status" value="1"/>
</dbReference>
<dbReference type="Pfam" id="PF00147">
    <property type="entry name" value="Fibrinogen_C"/>
    <property type="match status" value="1"/>
</dbReference>
<dbReference type="SMART" id="SM00186">
    <property type="entry name" value="FBG"/>
    <property type="match status" value="1"/>
</dbReference>
<dbReference type="SMART" id="SM01212">
    <property type="entry name" value="Fib_alpha"/>
    <property type="match status" value="1"/>
</dbReference>
<dbReference type="SUPFAM" id="SSF56496">
    <property type="entry name" value="Fibrinogen C-terminal domain-like"/>
    <property type="match status" value="1"/>
</dbReference>
<dbReference type="SUPFAM" id="SSF58010">
    <property type="entry name" value="Fibrinogen coiled-coil and central regions"/>
    <property type="match status" value="1"/>
</dbReference>
<dbReference type="PROSITE" id="PS00514">
    <property type="entry name" value="FIBRINOGEN_C_1"/>
    <property type="match status" value="1"/>
</dbReference>
<dbReference type="PROSITE" id="PS51406">
    <property type="entry name" value="FIBRINOGEN_C_2"/>
    <property type="match status" value="1"/>
</dbReference>
<gene>
    <name type="primary">Fgb</name>
</gene>
<proteinExistence type="evidence at protein level"/>
<accession>Q8K0E8</accession>
<accession>Q91ZP1</accession>
<feature type="signal peptide" evidence="1">
    <location>
        <begin position="1"/>
        <end position="19"/>
    </location>
</feature>
<feature type="peptide" id="PRO_0000009078" description="Fibrinopeptide B" evidence="1">
    <location>
        <begin position="20"/>
        <end position="34"/>
    </location>
</feature>
<feature type="chain" id="PRO_0000009077" description="Fibrinogen beta chain">
    <location>
        <begin position="35"/>
        <end position="481"/>
    </location>
</feature>
<feature type="domain" description="Fibrinogen C-terminal" evidence="5">
    <location>
        <begin position="222"/>
        <end position="478"/>
    </location>
</feature>
<feature type="region of interest" description="Disordered" evidence="6">
    <location>
        <begin position="22"/>
        <end position="81"/>
    </location>
</feature>
<feature type="region of interest" description="Beta-chain polymerization, binding distal domain of another fibrin" evidence="1">
    <location>
        <begin position="35"/>
        <end position="37"/>
    </location>
</feature>
<feature type="coiled-coil region" evidence="4">
    <location>
        <begin position="149"/>
        <end position="213"/>
    </location>
</feature>
<feature type="compositionally biased region" description="Basic and acidic residues" evidence="6">
    <location>
        <begin position="31"/>
        <end position="47"/>
    </location>
</feature>
<feature type="site" description="Cleavage; by thrombin; to release fibrinopeptide B" evidence="1">
    <location>
        <begin position="34"/>
        <end position="35"/>
    </location>
</feature>
<feature type="glycosylation site" description="N-linked (GlcNAc...) asparagine" evidence="4">
    <location>
        <position position="384"/>
    </location>
</feature>
<feature type="disulfide bond" description="Interchain (with alpha chain)" evidence="5">
    <location>
        <position position="213"/>
    </location>
</feature>
<feature type="disulfide bond" description="Interchain (with gamma chain)" evidence="5">
    <location>
        <position position="217"/>
    </location>
</feature>
<feature type="disulfide bond" evidence="5">
    <location>
        <begin position="221"/>
        <end position="306"/>
    </location>
</feature>
<feature type="disulfide bond" evidence="5">
    <location>
        <begin position="231"/>
        <end position="260"/>
    </location>
</feature>
<feature type="disulfide bond" evidence="5">
    <location>
        <begin position="414"/>
        <end position="427"/>
    </location>
</feature>
<comment type="function">
    <text evidence="2">Cleaved by the protease thrombin to yield monomers which, together with fibrinogen alpha (FGA) and fibrinogen gamma (FGG), polymerize to form an insoluble fibrin matrix. Fibrin has a major function in hemostasis as one of the primary components of blood clots. In addition, functions during the early stages of wound repair to stabilize the lesion and guide cell migration during re-epithelialization. Was originally thought to be essential for platelet aggregation, based on in vitro studies using anticoagulated blood. However, subsequent studies have shown that it is not absolutely required for thrombus formation in vivo. Enhances expression of SELP in activated platelets via an ITGB3-dependent pathway. Maternal fibrinogen is essential for successful pregnancy. Fibrin deposition is also associated with infection, where it protects against IFNG-mediated hemorrhage. May also facilitate the immune response via both innate and T-cell mediated pathways.</text>
</comment>
<comment type="subunit">
    <text evidence="3">Heterohexamer; disulfide linked. Contains 2 sets of 3 non-identical chains (alpha, beta and gamma). The 2 heterotrimers are in head to head conformation with the N-termini in a small central domain (By similarity).</text>
</comment>
<comment type="subcellular location">
    <subcellularLocation>
        <location evidence="3">Secreted</location>
    </subcellularLocation>
</comment>
<comment type="domain">
    <text evidence="3">A long coiled coil structure formed by 3 polypeptide chains connects the central nodule to the C-terminal domains (distal nodules). The long C-terminal ends of the alpha chains fold back, contributing a fourth strand to the coiled coil structure (By similarity).</text>
</comment>
<comment type="PTM">
    <text evidence="1">Conversion of fibrinogen to fibrin is triggered by thrombin, which cleaves fibrinopeptides A and B from alpha and beta chains, and thus exposes the N-terminal polymerization sites responsible for the formation of the soft clot.</text>
</comment>
<keyword id="KW-1064">Adaptive immunity</keyword>
<keyword id="KW-0094">Blood coagulation</keyword>
<keyword id="KW-0175">Coiled coil</keyword>
<keyword id="KW-1015">Disulfide bond</keyword>
<keyword id="KW-0325">Glycoprotein</keyword>
<keyword id="KW-0356">Hemostasis</keyword>
<keyword id="KW-0391">Immunity</keyword>
<keyword id="KW-0399">Innate immunity</keyword>
<keyword id="KW-1185">Reference proteome</keyword>
<keyword id="KW-0964">Secreted</keyword>
<keyword id="KW-0732">Signal</keyword>
<organism>
    <name type="scientific">Mus musculus</name>
    <name type="common">Mouse</name>
    <dbReference type="NCBI Taxonomy" id="10090"/>
    <lineage>
        <taxon>Eukaryota</taxon>
        <taxon>Metazoa</taxon>
        <taxon>Chordata</taxon>
        <taxon>Craniata</taxon>
        <taxon>Vertebrata</taxon>
        <taxon>Euteleostomi</taxon>
        <taxon>Mammalia</taxon>
        <taxon>Eutheria</taxon>
        <taxon>Euarchontoglires</taxon>
        <taxon>Glires</taxon>
        <taxon>Rodentia</taxon>
        <taxon>Myomorpha</taxon>
        <taxon>Muroidea</taxon>
        <taxon>Muridae</taxon>
        <taxon>Murinae</taxon>
        <taxon>Mus</taxon>
        <taxon>Mus</taxon>
    </lineage>
</organism>
<name>FIBB_MOUSE</name>
<evidence type="ECO:0000250" key="1"/>
<evidence type="ECO:0000250" key="2">
    <source>
        <dbReference type="UniProtKB" id="E9PV24"/>
    </source>
</evidence>
<evidence type="ECO:0000250" key="3">
    <source>
        <dbReference type="UniProtKB" id="P02675"/>
    </source>
</evidence>
<evidence type="ECO:0000255" key="4"/>
<evidence type="ECO:0000255" key="5">
    <source>
        <dbReference type="PROSITE-ProRule" id="PRU00739"/>
    </source>
</evidence>
<evidence type="ECO:0000256" key="6">
    <source>
        <dbReference type="SAM" id="MobiDB-lite"/>
    </source>
</evidence>
<protein>
    <recommendedName>
        <fullName>Fibrinogen beta chain</fullName>
    </recommendedName>
    <component>
        <recommendedName>
            <fullName>Fibrinopeptide B</fullName>
        </recommendedName>
    </component>
    <component>
        <recommendedName>
            <fullName>Fibrinogen beta chain</fullName>
        </recommendedName>
    </component>
</protein>
<reference key="1">
    <citation type="journal article" date="2004" name="Genome Res.">
        <title>The status, quality, and expansion of the NIH full-length cDNA project: the Mammalian Gene Collection (MGC).</title>
        <authorList>
            <consortium name="The MGC Project Team"/>
        </authorList>
    </citation>
    <scope>NUCLEOTIDE SEQUENCE [LARGE SCALE MRNA]</scope>
    <source>
        <strain>FVB/N</strain>
        <tissue>Liver</tissue>
    </source>
</reference>
<reference key="2">
    <citation type="submission" date="2001-08" db="EMBL/GenBank/DDBJ databases">
        <title>Mouse fibrinogen B-beta-chain.</title>
        <authorList>
            <person name="Murakawa M."/>
            <person name="Freeman M.W."/>
        </authorList>
    </citation>
    <scope>NUCLEOTIDE SEQUENCE [MRNA] OF 234-469</scope>
</reference>
<reference key="3">
    <citation type="journal article" date="2010" name="Cell">
        <title>A tissue-specific atlas of mouse protein phosphorylation and expression.</title>
        <authorList>
            <person name="Huttlin E.L."/>
            <person name="Jedrychowski M.P."/>
            <person name="Elias J.E."/>
            <person name="Goswami T."/>
            <person name="Rad R."/>
            <person name="Beausoleil S.A."/>
            <person name="Villen J."/>
            <person name="Haas W."/>
            <person name="Sowa M.E."/>
            <person name="Gygi S.P."/>
        </authorList>
    </citation>
    <scope>IDENTIFICATION BY MASS SPECTROMETRY [LARGE SCALE ANALYSIS]</scope>
    <source>
        <tissue>Brain</tissue>
        <tissue>Brown adipose tissue</tissue>
        <tissue>Heart</tissue>
        <tissue>Kidney</tissue>
        <tissue>Liver</tissue>
        <tissue>Lung</tissue>
        <tissue>Pancreas</tissue>
        <tissue>Spleen</tissue>
        <tissue>Testis</tissue>
    </source>
</reference>